<protein>
    <recommendedName>
        <fullName>Structural protein VP9</fullName>
    </recommendedName>
</protein>
<evidence type="ECO:0000269" key="1">
    <source>
    </source>
</evidence>
<accession>O93214</accession>
<comment type="subcellular location">
    <subcellularLocation>
        <location evidence="1">Virion</location>
    </subcellularLocation>
    <subcellularLocation>
        <location evidence="1">Host cytoplasm</location>
    </subcellularLocation>
</comment>
<dbReference type="EMBL" id="AF000720">
    <property type="protein sequence ID" value="AAB88254.1"/>
    <property type="molecule type" value="Genomic_RNA"/>
</dbReference>
<dbReference type="RefSeq" id="NP_690890.1">
    <property type="nucleotide sequence ID" value="NC_004180.1"/>
</dbReference>
<dbReference type="SMR" id="O93214"/>
<dbReference type="GeneID" id="993307"/>
<dbReference type="KEGG" id="vg:993307"/>
<dbReference type="Proteomes" id="UP000001675">
    <property type="component" value="Genome"/>
</dbReference>
<dbReference type="GO" id="GO:0030430">
    <property type="term" value="C:host cell cytoplasm"/>
    <property type="evidence" value="ECO:0007669"/>
    <property type="project" value="UniProtKB-SubCell"/>
</dbReference>
<dbReference type="GO" id="GO:0019028">
    <property type="term" value="C:viral capsid"/>
    <property type="evidence" value="ECO:0007669"/>
    <property type="project" value="UniProtKB-KW"/>
</dbReference>
<feature type="chain" id="PRO_0000403197" description="Structural protein VP9">
    <location>
        <begin position="1"/>
        <end position="337"/>
    </location>
</feature>
<organism>
    <name type="scientific">Colorado tick fever virus (strain USA/Florio N-7180)</name>
    <name type="common">CTFV</name>
    <dbReference type="NCBI Taxonomy" id="648168"/>
    <lineage>
        <taxon>Viruses</taxon>
        <taxon>Riboviria</taxon>
        <taxon>Orthornavirae</taxon>
        <taxon>Duplornaviricota</taxon>
        <taxon>Resentoviricetes</taxon>
        <taxon>Reovirales</taxon>
        <taxon>Spinareoviridae</taxon>
        <taxon>Coltivirus</taxon>
        <taxon>Colorado tick fever coltivirus</taxon>
    </lineage>
</organism>
<sequence length="337" mass="37974">MFGYLQLINPTTDIYIKDYGNFSGIVAHQAYDPVRRDHMLLRSMKLHFGPNSKLLWLGDFHAITLSHANMIFGASSVGFKGVNVSTLPPDTLTTGIRPRPVVTMDFAQLKGFYSDLAQKEDYIMYFHDMVKFVSQTGGAPVSLRDVFLWISESVTGPVVIRTDCVTGCNNLWPSGSGHFYFPYERKTKFRYGTFVECGKNLTWSEGPQWDVKSYVVGFNFVTRANSLLGGGFDEVCYRLMMQAEVPRQVAEQGLTLEQAVRKLASEHHMSRPQLTSRRVPGITDQTKYEAYVVCGPFRTGQVVADSLQMAEDLAWREMLGTLKTLIHDEARQTKGCC</sequence>
<proteinExistence type="predicted"/>
<name>VP9_CTFVL</name>
<reference key="1">
    <citation type="journal article" date="1997" name="J. Gen. Virol.">
        <title>Complete nucleotide sequence of Colorado tick fever virus segments M6, S1 and S2.</title>
        <authorList>
            <person name="Attoui H."/>
            <person name="De Micco P."/>
            <person name="de Lamballerie X."/>
        </authorList>
    </citation>
    <scope>NUCLEOTIDE SEQUENCE [GENOMIC RNA]</scope>
</reference>
<reference key="2">
    <citation type="journal article" date="2004" name="J. Gen. Virol.">
        <title>Termination and read-through proteins encoded by genome segment 9 of Colorado tick fever virus.</title>
        <authorList>
            <person name="Mohd Jaafar F."/>
            <person name="Attoui H."/>
            <person name="De Micco P."/>
            <person name="De Lamballerie X."/>
        </authorList>
    </citation>
    <scope>SUBCELLULAR LOCATION</scope>
</reference>
<organismHost>
    <name type="scientific">Callospermophilus lateralis</name>
    <name type="common">Golden-mantled ground squirrel</name>
    <name type="synonym">Spermophilus lateralis</name>
    <dbReference type="NCBI Taxonomy" id="76772"/>
</organismHost>
<organismHost>
    <name type="scientific">Dermacentor andersoni</name>
    <name type="common">Rocky mountain wood tick</name>
    <dbReference type="NCBI Taxonomy" id="34620"/>
</organismHost>
<organismHost>
    <name type="scientific">Erethizon dorsatum</name>
    <name type="common">North American porcupine</name>
    <name type="synonym">Hystrix dorsata</name>
    <dbReference type="NCBI Taxonomy" id="34844"/>
</organismHost>
<organismHost>
    <name type="scientific">Homo sapiens</name>
    <name type="common">Human</name>
    <dbReference type="NCBI Taxonomy" id="9606"/>
</organismHost>
<organismHost>
    <name type="scientific">Neotoma cinerea</name>
    <name type="common">Bushy-tailed woodrat</name>
    <name type="synonym">Mus cinereus</name>
    <dbReference type="NCBI Taxonomy" id="105147"/>
</organismHost>
<organismHost>
    <name type="scientific">Peromyscus maniculatus</name>
    <name type="common">North American deer mouse</name>
    <dbReference type="NCBI Taxonomy" id="10042"/>
</organismHost>
<keyword id="KW-0167">Capsid protein</keyword>
<keyword id="KW-1035">Host cytoplasm</keyword>
<keyword id="KW-1185">Reference proteome</keyword>
<keyword id="KW-0946">Virion</keyword>